<proteinExistence type="evidence at protein level"/>
<feature type="signal peptide" evidence="3">
    <location>
        <begin position="1"/>
        <end position="20"/>
    </location>
</feature>
<feature type="propeptide" id="PRO_0000340299" evidence="1">
    <location>
        <begin position="21"/>
        <end position="189"/>
    </location>
</feature>
<feature type="chain" id="PRO_0000340300" description="Zinc metalloproteinase-disintegrin-like VAP1">
    <location>
        <begin position="190"/>
        <end position="610"/>
    </location>
</feature>
<feature type="domain" description="Peptidase M12B" evidence="5">
    <location>
        <begin position="199"/>
        <end position="395"/>
    </location>
</feature>
<feature type="domain" description="Disintegrin" evidence="4">
    <location>
        <begin position="403"/>
        <end position="488"/>
    </location>
</feature>
<feature type="short sequence motif" description="Metal-binding" evidence="13">
    <location>
        <begin position="335"/>
        <end position="346"/>
    </location>
</feature>
<feature type="short sequence motif" description="D/ECD-tripeptide">
    <location>
        <begin position="467"/>
        <end position="469"/>
    </location>
</feature>
<feature type="active site" description="Proton acceptor" evidence="5 13">
    <location>
        <position position="336"/>
    </location>
</feature>
<feature type="binding site" evidence="5 9 14 15 16">
    <location>
        <position position="335"/>
    </location>
    <ligand>
        <name>Zn(2+)</name>
        <dbReference type="ChEBI" id="CHEBI:29105"/>
        <note>catalytic</note>
    </ligand>
</feature>
<feature type="binding site" evidence="5 9 14 15 16">
    <location>
        <position position="339"/>
    </location>
    <ligand>
        <name>Zn(2+)</name>
        <dbReference type="ChEBI" id="CHEBI:29105"/>
        <note>catalytic</note>
    </ligand>
</feature>
<feature type="binding site" evidence="5 9 14 15 16">
    <location>
        <position position="345"/>
    </location>
    <ligand>
        <name>Zn(2+)</name>
        <dbReference type="ChEBI" id="CHEBI:29105"/>
        <note>catalytic</note>
    </ligand>
</feature>
<feature type="binding site" evidence="9 14 15 16">
    <location>
        <position position="405"/>
    </location>
    <ligand>
        <name>Ca(2+)</name>
        <dbReference type="ChEBI" id="CHEBI:29108"/>
        <label>1</label>
    </ligand>
</feature>
<feature type="binding site" evidence="9 14 15 16">
    <location>
        <position position="408"/>
    </location>
    <ligand>
        <name>Ca(2+)</name>
        <dbReference type="ChEBI" id="CHEBI:29108"/>
        <label>1</label>
    </ligand>
</feature>
<feature type="binding site" evidence="9 14 15 16">
    <location>
        <position position="410"/>
    </location>
    <ligand>
        <name>Ca(2+)</name>
        <dbReference type="ChEBI" id="CHEBI:29108"/>
        <label>1</label>
    </ligand>
</feature>
<feature type="binding site" evidence="9 14 15 16">
    <location>
        <position position="412"/>
    </location>
    <ligand>
        <name>Ca(2+)</name>
        <dbReference type="ChEBI" id="CHEBI:29108"/>
        <label>1</label>
    </ligand>
</feature>
<feature type="binding site" evidence="9 14 15 16">
    <location>
        <position position="415"/>
    </location>
    <ligand>
        <name>Ca(2+)</name>
        <dbReference type="ChEBI" id="CHEBI:29108"/>
        <label>1</label>
    </ligand>
</feature>
<feature type="binding site" evidence="9 14 15 16">
    <location>
        <position position="418"/>
    </location>
    <ligand>
        <name>Ca(2+)</name>
        <dbReference type="ChEBI" id="CHEBI:29108"/>
        <label>1</label>
    </ligand>
</feature>
<feature type="binding site" evidence="9 14 15 16">
    <location>
        <position position="469"/>
    </location>
    <ligand>
        <name>Ca(2+)</name>
        <dbReference type="ChEBI" id="CHEBI:29108"/>
        <label>2</label>
    </ligand>
</feature>
<feature type="binding site" evidence="9 14 15 16">
    <location>
        <position position="470"/>
    </location>
    <ligand>
        <name>Ca(2+)</name>
        <dbReference type="ChEBI" id="CHEBI:29108"/>
        <label>2</label>
    </ligand>
</feature>
<feature type="binding site" evidence="9 14 15 16">
    <location>
        <position position="472"/>
    </location>
    <ligand>
        <name>Ca(2+)</name>
        <dbReference type="ChEBI" id="CHEBI:29108"/>
        <label>2</label>
    </ligand>
</feature>
<feature type="binding site" evidence="9 14 15 16">
    <location>
        <position position="483"/>
    </location>
    <ligand>
        <name>Ca(2+)</name>
        <dbReference type="ChEBI" id="CHEBI:29108"/>
        <label>2</label>
    </ligand>
</feature>
<feature type="binding site" evidence="9 14 15 16">
    <location>
        <position position="484"/>
    </location>
    <ligand>
        <name>Ca(2+)</name>
        <dbReference type="ChEBI" id="CHEBI:29108"/>
        <label>2</label>
    </ligand>
</feature>
<feature type="modified residue" description="Pyrrolidone carboxylic acid (Glu)" evidence="2">
    <location>
        <position position="190"/>
    </location>
</feature>
<feature type="glycosylation site" description="N-linked (GlcNAc...) asparagine" evidence="9 14 15 16">
    <location>
        <position position="218"/>
    </location>
</feature>
<feature type="disulfide bond" evidence="5 9 14 15 16">
    <location>
        <begin position="310"/>
        <end position="390"/>
    </location>
</feature>
<feature type="disulfide bond" evidence="5 9 14 15 16">
    <location>
        <begin position="350"/>
        <end position="374"/>
    </location>
</feature>
<feature type="disulfide bond" evidence="5 9 14 15 16">
    <location>
        <begin position="352"/>
        <end position="357"/>
    </location>
</feature>
<feature type="disulfide bond" description="Interchain (with C-365)" evidence="9 14 15 16">
    <location>
        <position position="365"/>
    </location>
</feature>
<feature type="disulfide bond" evidence="9 14 15 16">
    <location>
        <begin position="406"/>
        <end position="435"/>
    </location>
</feature>
<feature type="disulfide bond" evidence="9 14 15 16">
    <location>
        <begin position="417"/>
        <end position="430"/>
    </location>
</feature>
<feature type="disulfide bond" evidence="9 14 15 16">
    <location>
        <begin position="419"/>
        <end position="425"/>
    </location>
</feature>
<feature type="disulfide bond" evidence="9 14 15 16">
    <location>
        <begin position="429"/>
        <end position="452"/>
    </location>
</feature>
<feature type="disulfide bond" evidence="9 14 15 16">
    <location>
        <begin position="443"/>
        <end position="449"/>
    </location>
</feature>
<feature type="disulfide bond" evidence="9 14 15 16">
    <location>
        <begin position="448"/>
        <end position="474"/>
    </location>
</feature>
<feature type="disulfide bond" evidence="4 9 14 15 16">
    <location>
        <begin position="461"/>
        <end position="481"/>
    </location>
</feature>
<feature type="disulfide bond" evidence="9 14 15 16">
    <location>
        <begin position="468"/>
        <end position="499"/>
    </location>
</feature>
<feature type="disulfide bond" evidence="9 14 15 16">
    <location>
        <begin position="492"/>
        <end position="504"/>
    </location>
</feature>
<feature type="disulfide bond" evidence="9 14 15 16">
    <location>
        <begin position="511"/>
        <end position="561"/>
    </location>
</feature>
<feature type="disulfide bond" evidence="9 14 15 16">
    <location>
        <begin position="526"/>
        <end position="572"/>
    </location>
</feature>
<feature type="disulfide bond" evidence="9 14 15 16">
    <location>
        <begin position="539"/>
        <end position="549"/>
    </location>
</feature>
<feature type="disulfide bond" evidence="9 14 15 16">
    <location>
        <begin position="556"/>
        <end position="598"/>
    </location>
</feature>
<feature type="disulfide bond" evidence="9 14 15 16">
    <location>
        <begin position="592"/>
        <end position="603"/>
    </location>
</feature>
<feature type="helix" evidence="17">
    <location>
        <begin position="189"/>
        <end position="196"/>
    </location>
</feature>
<feature type="strand" evidence="17">
    <location>
        <begin position="199"/>
        <end position="207"/>
    </location>
</feature>
<feature type="helix" evidence="17">
    <location>
        <begin position="209"/>
        <end position="214"/>
    </location>
</feature>
<feature type="turn" evidence="17">
    <location>
        <begin position="215"/>
        <end position="217"/>
    </location>
</feature>
<feature type="helix" evidence="17">
    <location>
        <begin position="219"/>
        <end position="238"/>
    </location>
</feature>
<feature type="turn" evidence="17">
    <location>
        <begin position="239"/>
        <end position="241"/>
    </location>
</feature>
<feature type="strand" evidence="17">
    <location>
        <begin position="242"/>
        <end position="251"/>
    </location>
</feature>
<feature type="helix" evidence="17">
    <location>
        <begin position="264"/>
        <end position="278"/>
    </location>
</feature>
<feature type="turn" evidence="17">
    <location>
        <begin position="279"/>
        <end position="282"/>
    </location>
</feature>
<feature type="strand" evidence="17">
    <location>
        <begin position="286"/>
        <end position="292"/>
    </location>
</feature>
<feature type="strand" evidence="17">
    <location>
        <begin position="297"/>
        <end position="299"/>
    </location>
</feature>
<feature type="strand" evidence="17">
    <location>
        <begin position="302"/>
        <end position="304"/>
    </location>
</feature>
<feature type="turn" evidence="17">
    <location>
        <begin position="312"/>
        <end position="314"/>
    </location>
</feature>
<feature type="strand" evidence="17">
    <location>
        <begin position="316"/>
        <end position="320"/>
    </location>
</feature>
<feature type="strand" evidence="17">
    <location>
        <begin position="323"/>
        <end position="325"/>
    </location>
</feature>
<feature type="helix" evidence="17">
    <location>
        <begin position="326"/>
        <end position="340"/>
    </location>
</feature>
<feature type="strand" evidence="17">
    <location>
        <begin position="352"/>
        <end position="355"/>
    </location>
</feature>
<feature type="helix" evidence="17">
    <location>
        <begin position="373"/>
        <end position="386"/>
    </location>
</feature>
<feature type="helix" evidence="17">
    <location>
        <begin position="390"/>
        <end position="392"/>
    </location>
</feature>
<feature type="turn" evidence="17">
    <location>
        <begin position="397"/>
        <end position="399"/>
    </location>
</feature>
<feature type="strand" evidence="17">
    <location>
        <begin position="408"/>
        <end position="410"/>
    </location>
</feature>
<feature type="turn" evidence="17">
    <location>
        <begin position="422"/>
        <end position="424"/>
    </location>
</feature>
<feature type="turn" evidence="17">
    <location>
        <begin position="432"/>
        <end position="434"/>
    </location>
</feature>
<feature type="strand" evidence="17">
    <location>
        <begin position="444"/>
        <end position="446"/>
    </location>
</feature>
<feature type="strand" evidence="17">
    <location>
        <begin position="460"/>
        <end position="462"/>
    </location>
</feature>
<feature type="strand" evidence="18">
    <location>
        <begin position="465"/>
        <end position="469"/>
    </location>
</feature>
<feature type="turn" evidence="17">
    <location>
        <begin position="493"/>
        <end position="496"/>
    </location>
</feature>
<feature type="helix" evidence="17">
    <location>
        <begin position="507"/>
        <end position="515"/>
    </location>
</feature>
<feature type="helix" evidence="17">
    <location>
        <begin position="524"/>
        <end position="531"/>
    </location>
</feature>
<feature type="strand" evidence="17">
    <location>
        <begin position="534"/>
        <end position="536"/>
    </location>
</feature>
<feature type="strand" evidence="17">
    <location>
        <begin position="539"/>
        <end position="547"/>
    </location>
</feature>
<feature type="helix" evidence="17">
    <location>
        <begin position="551"/>
        <end position="556"/>
    </location>
</feature>
<feature type="turn" evidence="17">
    <location>
        <begin position="581"/>
        <end position="584"/>
    </location>
</feature>
<feature type="strand" evidence="17">
    <location>
        <begin position="591"/>
        <end position="593"/>
    </location>
</feature>
<feature type="strand" evidence="17">
    <location>
        <begin position="596"/>
        <end position="605"/>
    </location>
</feature>
<sequence>MIQVLLVTISLAVFPYQGSSVILESGNVNDYEVVYPRKVTALPKGAVQPKYEDAMQYEFKVNGEPVVLHLEKNKGLFSEDYSETHYSPDGREITTYPPVEDHCYYHGRIENDADSTASISACNGLKGHFKLQGEMYLIEPLKLPDSEAHAVFKYENVEKEDEAPKMCGVTQNWESYEPIKKASQSNLTPEQQRYLNAKKYVKLFLVADYIMYLKYGRNLTAVRTRMYDIVNVITPIYHRMNIHVALVGLEIWSNTDKIIVQSSADVTLDLFAKWRATDLLSRKSHDNAQLLTGINFNGPTAGLGYLGGICNTMYSAGIVQDHSKIHHLVAIAMAHEMGHNLGMDHDKDTCTCGTRPCVMAGALSCEASFLFSDCSQKDHREFLIKNMPQCILKKPLKTDVVSPAVCGNYFVEVGEECDCGSPRTCRDPCCDATTCKLRQGAQCAEGLCCDQCRFKGAGTECRAAKDECDMADVCTGRSAECTDRFQRNGQPCKNNNGYCYNGKCPIMADQCIALFGPGATVSQDACFQFNREGNHYGYCRKEQNTKIACEPQDVKCGRLYCFPNSPENKNPCNIYYSPNDEDKGMVLPGTKCADRKACSNGQCVDVTTPY</sequence>
<name>VM3V1_CROAT</name>
<comment type="function">
    <text evidence="6 7 8 10 12">Zinc metalloprotease that has fibrinogenolytic and hemorrhagic activities. It induces apoptosis in vascular endothelial cells (VEC), without degrading extracellular matrix (it cannot cleave collagen) or inhibiting adhesion of VEC. VAP1-induced apoptosis is inhibited by antibodies for integrin alpha-3, alpha-6, beta-1 and CD9. Apoptosis is accompanied by severe cell fragmentation, which is controlled by caspases.</text>
</comment>
<comment type="cofactor">
    <cofactor evidence="9">
        <name>Zn(2+)</name>
        <dbReference type="ChEBI" id="CHEBI:29105"/>
    </cofactor>
    <text evidence="9">Binds 1 zinc ion per subunit.</text>
</comment>
<comment type="activity regulation">
    <text evidence="6">Inhibited by EDTA and EGTA, but not by PMSF.</text>
</comment>
<comment type="subunit">
    <text evidence="9 12">Homodimer; disulfide-linked.</text>
</comment>
<comment type="subcellular location">
    <subcellularLocation>
        <location evidence="1">Secreted</location>
    </subcellularLocation>
</comment>
<comment type="tissue specificity">
    <text>Expressed by the venom gland.</text>
</comment>
<comment type="PTM">
    <text evidence="11">The N-terminus is blocked.</text>
</comment>
<comment type="toxic dose">
    <text evidence="12">LD(50) is 0.3 ug/ml against vascular endothelial cells in culture.</text>
</comment>
<comment type="similarity">
    <text evidence="13">Belongs to the venom metalloproteinase (M12B) family. P-III subfamily. P-IIIc sub-subfamily.</text>
</comment>
<protein>
    <recommendedName>
        <fullName>Zinc metalloproteinase-disintegrin-like VAP1</fullName>
        <ecNumber>3.4.24.-</ecNumber>
    </recommendedName>
    <alternativeName>
        <fullName>Snake venom metalloproteinase</fullName>
        <shortName>SVMP</shortName>
    </alternativeName>
    <alternativeName>
        <fullName>Vascular apoptosis-inducing protein 1</fullName>
        <shortName>Vap-1</shortName>
    </alternativeName>
</protein>
<keyword id="KW-0002">3D-structure</keyword>
<keyword id="KW-0053">Apoptosis</keyword>
<keyword id="KW-0106">Calcium</keyword>
<keyword id="KW-1217">Cell adhesion impairing toxin</keyword>
<keyword id="KW-0903">Direct protein sequencing</keyword>
<keyword id="KW-1015">Disulfide bond</keyword>
<keyword id="KW-1206">Fibrinogenolytic toxin</keyword>
<keyword id="KW-0325">Glycoprotein</keyword>
<keyword id="KW-1200">Hemorrhagic toxin</keyword>
<keyword id="KW-1199">Hemostasis impairing toxin</keyword>
<keyword id="KW-0378">Hydrolase</keyword>
<keyword id="KW-0479">Metal-binding</keyword>
<keyword id="KW-0482">Metalloprotease</keyword>
<keyword id="KW-0645">Protease</keyword>
<keyword id="KW-0873">Pyrrolidone carboxylic acid</keyword>
<keyword id="KW-0964">Secreted</keyword>
<keyword id="KW-0732">Signal</keyword>
<keyword id="KW-0800">Toxin</keyword>
<keyword id="KW-0862">Zinc</keyword>
<keyword id="KW-0865">Zymogen</keyword>
<reference key="1">
    <citation type="journal article" date="2000" name="Biochem. Biophys. Res. Commun.">
        <title>cDNA cloning and characterization of vascular apoptosis-inducing protein 1.</title>
        <authorList>
            <person name="Masuda S."/>
            <person name="Ohta T."/>
            <person name="Kaji K."/>
            <person name="Fox J.W."/>
            <person name="Hayashi H."/>
            <person name="Araki S."/>
        </authorList>
    </citation>
    <scope>NUCLEOTIDE SEQUENCE [MRNA]</scope>
    <scope>PROTEIN SEQUENCE OF 240-251; 274-283; 378-385 AND 507-519</scope>
    <scope>FUNCTION</scope>
    <scope>ACTIVITY REGULATION</scope>
    <source>
        <tissue>Venom</tissue>
        <tissue>Venom gland</tissue>
    </source>
</reference>
<reference key="2">
    <citation type="journal article" date="1998" name="Eur. J. Biochem.">
        <title>Two vascular apoptosis-inducing proteins from snake venom are members of the metalloprotease/disintegrin family.</title>
        <authorList>
            <person name="Masuda S."/>
            <person name="Hayashi H."/>
            <person name="Araki S."/>
        </authorList>
    </citation>
    <scope>PROTEIN SEQUENCE OF 274-283 AND 584-591</scope>
    <source>
        <tissue>Venom</tissue>
    </source>
</reference>
<reference key="3">
    <citation type="journal article" date="2009" name="J. Proteome Res.">
        <title>Exploring the venom proteome of the western diamondback rattlesnake, Crotalus atrox, via snake venomics and combinatorial peptide ligand library approaches.</title>
        <authorList>
            <person name="Calvete J.J."/>
            <person name="Fasoli E."/>
            <person name="Sanz L."/>
            <person name="Boschetti E."/>
            <person name="Righetti P.G."/>
        </authorList>
    </citation>
    <scope>PROTEIN SEQUENCE OF 51-60; 109-126 AND 258-273</scope>
    <scope>IDENTIFICATION BY MASS SPECTROMETRY</scope>
    <source>
        <tissue>Venom</tissue>
    </source>
</reference>
<reference key="4">
    <citation type="journal article" date="1997" name="Biochem. Biophys. Res. Commun.">
        <title>Purification of a vascular apoptosis-inducing factor from hemorrhagic snake venom.</title>
        <authorList>
            <person name="Masuda S."/>
            <person name="Araki S."/>
            <person name="Yamamoto T."/>
            <person name="Kaji K."/>
            <person name="Hayashi H."/>
        </authorList>
    </citation>
    <scope>FUNCTION</scope>
    <scope>SUBUNIT</scope>
    <scope>TOXIC DOSE</scope>
    <source>
        <tissue>Venom</tissue>
    </source>
</reference>
<reference key="5">
    <citation type="journal article" date="2002" name="Toxicon">
        <title>Involvement of specific integrins in apoptosis induced by vascular apoptosis-inducing protein 1.</title>
        <authorList>
            <person name="Araki S."/>
            <person name="Masuda S."/>
            <person name="Maeda H."/>
            <person name="Ying M.J."/>
            <person name="Hayashi H."/>
        </authorList>
    </citation>
    <scope>FUNCTION</scope>
</reference>
<reference key="6">
    <citation type="journal article" date="2005" name="Toxicon">
        <title>Severe cell fragmentation in the endothelial cell apoptosis induced by snake apoptosis toxin VAP1 is an apoptotic characteristic controlled by caspases.</title>
        <authorList>
            <person name="Maruyama J."/>
            <person name="Hayashi H."/>
            <person name="Miao J."/>
            <person name="Sawada H."/>
            <person name="Araki S."/>
        </authorList>
    </citation>
    <scope>FUNCTION</scope>
    <source>
        <tissue>Venom</tissue>
    </source>
</reference>
<reference key="7">
    <citation type="journal article" date="2008" name="Toxicon">
        <title>Hemorrhagic activity of the vascular apoptosis-inducing proteins VAP1 and VAP2 from Crotalus atrox.</title>
        <authorList>
            <person name="Kikushima E."/>
            <person name="Nakamura S."/>
            <person name="Oshima Y."/>
            <person name="Shibuya T."/>
            <person name="Miao J.Y."/>
            <person name="Hayashi H."/>
            <person name="Nikai T."/>
            <person name="Araki S."/>
        </authorList>
    </citation>
    <scope>FUNCTION</scope>
</reference>
<reference key="8">
    <citation type="journal article" date="2006" name="Acta Crystallogr. F">
        <title>Crystallization and preliminary X-ray crystallographic analysis of two vascular apoptosis-inducing proteins (VAPs) from Crotalus atrox venom.</title>
        <authorList>
            <person name="Igarashi T."/>
            <person name="Oishi Y."/>
            <person name="Araki S."/>
            <person name="Mori H."/>
            <person name="Takeda S."/>
        </authorList>
    </citation>
    <scope>CRYSTALLIZATION</scope>
    <source>
        <tissue>Venom</tissue>
    </source>
</reference>
<reference key="9">
    <citation type="journal article" date="2006" name="EMBO J.">
        <title>Crystal structures of VAP1 reveal ADAMs' MDC domain architecture and its unique C-shaped scaffold.</title>
        <authorList>
            <person name="Takeda S."/>
            <person name="Igarashi T."/>
            <person name="Mori H."/>
            <person name="Araki S."/>
        </authorList>
    </citation>
    <scope>X-RAY CRYSTALLOGRAPHY (2.5 ANGSTROMS) OF 185-610</scope>
    <scope>COFACTOR</scope>
    <scope>SUBUNIT</scope>
    <scope>METAL-BINDING SITES</scope>
    <scope>GLYCOSYLATION AT ASN-218</scope>
    <scope>DISULFIDE BONDS</scope>
    <source>
        <tissue>Venom</tissue>
    </source>
</reference>
<organism>
    <name type="scientific">Crotalus atrox</name>
    <name type="common">Western diamondback rattlesnake</name>
    <dbReference type="NCBI Taxonomy" id="8730"/>
    <lineage>
        <taxon>Eukaryota</taxon>
        <taxon>Metazoa</taxon>
        <taxon>Chordata</taxon>
        <taxon>Craniata</taxon>
        <taxon>Vertebrata</taxon>
        <taxon>Euteleostomi</taxon>
        <taxon>Lepidosauria</taxon>
        <taxon>Squamata</taxon>
        <taxon>Bifurcata</taxon>
        <taxon>Unidentata</taxon>
        <taxon>Episquamata</taxon>
        <taxon>Toxicofera</taxon>
        <taxon>Serpentes</taxon>
        <taxon>Colubroidea</taxon>
        <taxon>Viperidae</taxon>
        <taxon>Crotalinae</taxon>
        <taxon>Crotalus</taxon>
    </lineage>
</organism>
<accession>Q9DGB9</accession>
<evidence type="ECO:0000250" key="1"/>
<evidence type="ECO:0000250" key="2">
    <source>
        <dbReference type="UniProtKB" id="P0DM89"/>
    </source>
</evidence>
<evidence type="ECO:0000255" key="3"/>
<evidence type="ECO:0000255" key="4">
    <source>
        <dbReference type="PROSITE-ProRule" id="PRU00068"/>
    </source>
</evidence>
<evidence type="ECO:0000255" key="5">
    <source>
        <dbReference type="PROSITE-ProRule" id="PRU00276"/>
    </source>
</evidence>
<evidence type="ECO:0000269" key="6">
    <source>
    </source>
</evidence>
<evidence type="ECO:0000269" key="7">
    <source>
    </source>
</evidence>
<evidence type="ECO:0000269" key="8">
    <source>
    </source>
</evidence>
<evidence type="ECO:0000269" key="9">
    <source>
    </source>
</evidence>
<evidence type="ECO:0000269" key="10">
    <source>
    </source>
</evidence>
<evidence type="ECO:0000269" key="11">
    <source>
    </source>
</evidence>
<evidence type="ECO:0000269" key="12">
    <source>
    </source>
</evidence>
<evidence type="ECO:0000305" key="13"/>
<evidence type="ECO:0007744" key="14">
    <source>
        <dbReference type="PDB" id="2ERO"/>
    </source>
</evidence>
<evidence type="ECO:0007744" key="15">
    <source>
        <dbReference type="PDB" id="2ERP"/>
    </source>
</evidence>
<evidence type="ECO:0007744" key="16">
    <source>
        <dbReference type="PDB" id="2ERQ"/>
    </source>
</evidence>
<evidence type="ECO:0007829" key="17">
    <source>
        <dbReference type="PDB" id="2ERO"/>
    </source>
</evidence>
<evidence type="ECO:0007829" key="18">
    <source>
        <dbReference type="PDB" id="2ERP"/>
    </source>
</evidence>
<dbReference type="EC" id="3.4.24.-"/>
<dbReference type="EMBL" id="AB042840">
    <property type="protein sequence ID" value="BAB18307.1"/>
    <property type="molecule type" value="mRNA"/>
</dbReference>
<dbReference type="PIR" id="JC7530">
    <property type="entry name" value="JC7530"/>
</dbReference>
<dbReference type="PDB" id="2ERO">
    <property type="method" value="X-ray"/>
    <property type="resolution" value="2.50 A"/>
    <property type="chains" value="A/B=184-610"/>
</dbReference>
<dbReference type="PDB" id="2ERP">
    <property type="method" value="X-ray"/>
    <property type="resolution" value="2.95 A"/>
    <property type="chains" value="A/B=184-610"/>
</dbReference>
<dbReference type="PDB" id="2ERQ">
    <property type="method" value="X-ray"/>
    <property type="resolution" value="2.50 A"/>
    <property type="chains" value="A/B=184-610"/>
</dbReference>
<dbReference type="PDBsum" id="2ERO"/>
<dbReference type="PDBsum" id="2ERP"/>
<dbReference type="PDBsum" id="2ERQ"/>
<dbReference type="SMR" id="Q9DGB9"/>
<dbReference type="MEROPS" id="M12.186"/>
<dbReference type="iPTMnet" id="Q9DGB9"/>
<dbReference type="EvolutionaryTrace" id="Q9DGB9"/>
<dbReference type="GO" id="GO:0005576">
    <property type="term" value="C:extracellular region"/>
    <property type="evidence" value="ECO:0007669"/>
    <property type="project" value="UniProtKB-SubCell"/>
</dbReference>
<dbReference type="GO" id="GO:0005886">
    <property type="term" value="C:plasma membrane"/>
    <property type="evidence" value="ECO:0007669"/>
    <property type="project" value="TreeGrafter"/>
</dbReference>
<dbReference type="GO" id="GO:0042802">
    <property type="term" value="F:identical protein binding"/>
    <property type="evidence" value="ECO:0000314"/>
    <property type="project" value="UniProtKB"/>
</dbReference>
<dbReference type="GO" id="GO:0004222">
    <property type="term" value="F:metalloendopeptidase activity"/>
    <property type="evidence" value="ECO:0007669"/>
    <property type="project" value="InterPro"/>
</dbReference>
<dbReference type="GO" id="GO:0042803">
    <property type="term" value="F:protein homodimerization activity"/>
    <property type="evidence" value="ECO:0000314"/>
    <property type="project" value="UniProtKB"/>
</dbReference>
<dbReference type="GO" id="GO:0090729">
    <property type="term" value="F:toxin activity"/>
    <property type="evidence" value="ECO:0007669"/>
    <property type="project" value="UniProtKB-KW"/>
</dbReference>
<dbReference type="GO" id="GO:0008270">
    <property type="term" value="F:zinc ion binding"/>
    <property type="evidence" value="ECO:0000314"/>
    <property type="project" value="UniProtKB"/>
</dbReference>
<dbReference type="GO" id="GO:0006915">
    <property type="term" value="P:apoptotic process"/>
    <property type="evidence" value="ECO:0007669"/>
    <property type="project" value="UniProtKB-KW"/>
</dbReference>
<dbReference type="GO" id="GO:0006508">
    <property type="term" value="P:proteolysis"/>
    <property type="evidence" value="ECO:0007669"/>
    <property type="project" value="UniProtKB-KW"/>
</dbReference>
<dbReference type="CDD" id="cd04269">
    <property type="entry name" value="ZnMc_adamalysin_II_like"/>
    <property type="match status" value="1"/>
</dbReference>
<dbReference type="FunFam" id="3.40.390.10:FF:000002">
    <property type="entry name" value="Disintegrin and metalloproteinase domain-containing protein 22"/>
    <property type="match status" value="1"/>
</dbReference>
<dbReference type="FunFam" id="4.10.70.10:FF:000001">
    <property type="entry name" value="Disintegrin and metalloproteinase domain-containing protein 22"/>
    <property type="match status" value="1"/>
</dbReference>
<dbReference type="Gene3D" id="3.40.390.10">
    <property type="entry name" value="Collagenase (Catalytic Domain)"/>
    <property type="match status" value="1"/>
</dbReference>
<dbReference type="Gene3D" id="4.10.70.10">
    <property type="entry name" value="Disintegrin domain"/>
    <property type="match status" value="1"/>
</dbReference>
<dbReference type="InterPro" id="IPR006586">
    <property type="entry name" value="ADAM_Cys-rich"/>
</dbReference>
<dbReference type="InterPro" id="IPR018358">
    <property type="entry name" value="Disintegrin_CS"/>
</dbReference>
<dbReference type="InterPro" id="IPR001762">
    <property type="entry name" value="Disintegrin_dom"/>
</dbReference>
<dbReference type="InterPro" id="IPR036436">
    <property type="entry name" value="Disintegrin_dom_sf"/>
</dbReference>
<dbReference type="InterPro" id="IPR024079">
    <property type="entry name" value="MetalloPept_cat_dom_sf"/>
</dbReference>
<dbReference type="InterPro" id="IPR001590">
    <property type="entry name" value="Peptidase_M12B"/>
</dbReference>
<dbReference type="InterPro" id="IPR002870">
    <property type="entry name" value="Peptidase_M12B_N"/>
</dbReference>
<dbReference type="InterPro" id="IPR034027">
    <property type="entry name" value="Reprolysin_adamalysin"/>
</dbReference>
<dbReference type="PANTHER" id="PTHR11905">
    <property type="entry name" value="ADAM A DISINTEGRIN AND METALLOPROTEASE DOMAIN"/>
    <property type="match status" value="1"/>
</dbReference>
<dbReference type="PANTHER" id="PTHR11905:SF32">
    <property type="entry name" value="DISINTEGRIN AND METALLOPROTEINASE DOMAIN-CONTAINING PROTEIN 28"/>
    <property type="match status" value="1"/>
</dbReference>
<dbReference type="Pfam" id="PF08516">
    <property type="entry name" value="ADAM_CR"/>
    <property type="match status" value="1"/>
</dbReference>
<dbReference type="Pfam" id="PF00200">
    <property type="entry name" value="Disintegrin"/>
    <property type="match status" value="1"/>
</dbReference>
<dbReference type="Pfam" id="PF01562">
    <property type="entry name" value="Pep_M12B_propep"/>
    <property type="match status" value="1"/>
</dbReference>
<dbReference type="Pfam" id="PF01421">
    <property type="entry name" value="Reprolysin"/>
    <property type="match status" value="1"/>
</dbReference>
<dbReference type="PRINTS" id="PR00289">
    <property type="entry name" value="DISINTEGRIN"/>
</dbReference>
<dbReference type="SMART" id="SM00608">
    <property type="entry name" value="ACR"/>
    <property type="match status" value="1"/>
</dbReference>
<dbReference type="SMART" id="SM00050">
    <property type="entry name" value="DISIN"/>
    <property type="match status" value="1"/>
</dbReference>
<dbReference type="SUPFAM" id="SSF57552">
    <property type="entry name" value="Blood coagulation inhibitor (disintegrin)"/>
    <property type="match status" value="1"/>
</dbReference>
<dbReference type="SUPFAM" id="SSF55486">
    <property type="entry name" value="Metalloproteases ('zincins'), catalytic domain"/>
    <property type="match status" value="1"/>
</dbReference>
<dbReference type="PROSITE" id="PS50215">
    <property type="entry name" value="ADAM_MEPRO"/>
    <property type="match status" value="1"/>
</dbReference>
<dbReference type="PROSITE" id="PS00427">
    <property type="entry name" value="DISINTEGRIN_1"/>
    <property type="match status" value="1"/>
</dbReference>
<dbReference type="PROSITE" id="PS50214">
    <property type="entry name" value="DISINTEGRIN_2"/>
    <property type="match status" value="1"/>
</dbReference>
<dbReference type="PROSITE" id="PS00142">
    <property type="entry name" value="ZINC_PROTEASE"/>
    <property type="match status" value="1"/>
</dbReference>